<name>RS28_METMP</name>
<evidence type="ECO:0000255" key="1">
    <source>
        <dbReference type="HAMAP-Rule" id="MF_00292"/>
    </source>
</evidence>
<evidence type="ECO:0000305" key="2"/>
<reference key="1">
    <citation type="journal article" date="2004" name="J. Bacteriol.">
        <title>Complete genome sequence of the genetically tractable hydrogenotrophic methanogen Methanococcus maripaludis.</title>
        <authorList>
            <person name="Hendrickson E.L."/>
            <person name="Kaul R."/>
            <person name="Zhou Y."/>
            <person name="Bovee D."/>
            <person name="Chapman P."/>
            <person name="Chung J."/>
            <person name="Conway de Macario E."/>
            <person name="Dodsworth J.A."/>
            <person name="Gillett W."/>
            <person name="Graham D.E."/>
            <person name="Hackett M."/>
            <person name="Haydock A.K."/>
            <person name="Kang A."/>
            <person name="Land M.L."/>
            <person name="Levy R."/>
            <person name="Lie T.J."/>
            <person name="Major T.A."/>
            <person name="Moore B.C."/>
            <person name="Porat I."/>
            <person name="Palmeiri A."/>
            <person name="Rouse G."/>
            <person name="Saenphimmachak C."/>
            <person name="Soell D."/>
            <person name="Van Dien S."/>
            <person name="Wang T."/>
            <person name="Whitman W.B."/>
            <person name="Xia Q."/>
            <person name="Zhang Y."/>
            <person name="Larimer F.W."/>
            <person name="Olson M.V."/>
            <person name="Leigh J.A."/>
        </authorList>
    </citation>
    <scope>NUCLEOTIDE SEQUENCE [LARGE SCALE GENOMIC DNA]</scope>
    <source>
        <strain>DSM 14266 / JCM 13030 / NBRC 101832 / S2 / LL</strain>
    </source>
</reference>
<keyword id="KW-1185">Reference proteome</keyword>
<keyword id="KW-0687">Ribonucleoprotein</keyword>
<keyword id="KW-0689">Ribosomal protein</keyword>
<sequence length="76" mass="8457">MADDMVYQEAVAAEVIQVNGRTGVTGEIFQVRCKILGGKDTGRILTRNVKGPVKLGDLIMLRETEREAKQLGKRRK</sequence>
<accession>Q6LZI8</accession>
<dbReference type="EMBL" id="BX950229">
    <property type="protein sequence ID" value="CAF30196.1"/>
    <property type="molecule type" value="Genomic_DNA"/>
</dbReference>
<dbReference type="RefSeq" id="WP_011170584.1">
    <property type="nucleotide sequence ID" value="NC_005791.1"/>
</dbReference>
<dbReference type="SMR" id="Q6LZI8"/>
<dbReference type="STRING" id="267377.MMP0640"/>
<dbReference type="EnsemblBacteria" id="CAF30196">
    <property type="protein sequence ID" value="CAF30196"/>
    <property type="gene ID" value="MMP0640"/>
</dbReference>
<dbReference type="KEGG" id="mmp:MMP0640"/>
<dbReference type="PATRIC" id="fig|267377.15.peg.657"/>
<dbReference type="eggNOG" id="arCOG04314">
    <property type="taxonomic scope" value="Archaea"/>
</dbReference>
<dbReference type="HOGENOM" id="CLU_178987_2_1_2"/>
<dbReference type="OrthoDB" id="7620at2157"/>
<dbReference type="Proteomes" id="UP000000590">
    <property type="component" value="Chromosome"/>
</dbReference>
<dbReference type="GO" id="GO:0022627">
    <property type="term" value="C:cytosolic small ribosomal subunit"/>
    <property type="evidence" value="ECO:0007669"/>
    <property type="project" value="TreeGrafter"/>
</dbReference>
<dbReference type="GO" id="GO:0003735">
    <property type="term" value="F:structural constituent of ribosome"/>
    <property type="evidence" value="ECO:0007669"/>
    <property type="project" value="InterPro"/>
</dbReference>
<dbReference type="GO" id="GO:0030490">
    <property type="term" value="P:maturation of SSU-rRNA"/>
    <property type="evidence" value="ECO:0007669"/>
    <property type="project" value="TreeGrafter"/>
</dbReference>
<dbReference type="GO" id="GO:0000028">
    <property type="term" value="P:ribosomal small subunit assembly"/>
    <property type="evidence" value="ECO:0007669"/>
    <property type="project" value="TreeGrafter"/>
</dbReference>
<dbReference type="GO" id="GO:0006412">
    <property type="term" value="P:translation"/>
    <property type="evidence" value="ECO:0007669"/>
    <property type="project" value="UniProtKB-UniRule"/>
</dbReference>
<dbReference type="CDD" id="cd04457">
    <property type="entry name" value="S1_S28E"/>
    <property type="match status" value="1"/>
</dbReference>
<dbReference type="FunFam" id="2.40.50.140:FF:000145">
    <property type="entry name" value="30S ribosomal protein S28e"/>
    <property type="match status" value="1"/>
</dbReference>
<dbReference type="Gene3D" id="2.40.50.140">
    <property type="entry name" value="Nucleic acid-binding proteins"/>
    <property type="match status" value="1"/>
</dbReference>
<dbReference type="HAMAP" id="MF_00292">
    <property type="entry name" value="Ribosomal_eS28"/>
    <property type="match status" value="1"/>
</dbReference>
<dbReference type="InterPro" id="IPR012340">
    <property type="entry name" value="NA-bd_OB-fold"/>
</dbReference>
<dbReference type="InterPro" id="IPR000289">
    <property type="entry name" value="Ribosomal_eS28"/>
</dbReference>
<dbReference type="InterPro" id="IPR028626">
    <property type="entry name" value="Ribosomal_eS28_CS"/>
</dbReference>
<dbReference type="NCBIfam" id="NF003080">
    <property type="entry name" value="PRK04007.1"/>
    <property type="match status" value="1"/>
</dbReference>
<dbReference type="PANTHER" id="PTHR10769">
    <property type="entry name" value="40S RIBOSOMAL PROTEIN S28"/>
    <property type="match status" value="1"/>
</dbReference>
<dbReference type="PANTHER" id="PTHR10769:SF3">
    <property type="entry name" value="SMALL RIBOSOMAL SUBUNIT PROTEIN ES28"/>
    <property type="match status" value="1"/>
</dbReference>
<dbReference type="Pfam" id="PF01200">
    <property type="entry name" value="Ribosomal_S28e"/>
    <property type="match status" value="1"/>
</dbReference>
<dbReference type="SUPFAM" id="SSF50249">
    <property type="entry name" value="Nucleic acid-binding proteins"/>
    <property type="match status" value="1"/>
</dbReference>
<dbReference type="PROSITE" id="PS00961">
    <property type="entry name" value="RIBOSOMAL_S28E"/>
    <property type="match status" value="1"/>
</dbReference>
<organism>
    <name type="scientific">Methanococcus maripaludis (strain DSM 14266 / JCM 13030 / NBRC 101832 / S2 / LL)</name>
    <dbReference type="NCBI Taxonomy" id="267377"/>
    <lineage>
        <taxon>Archaea</taxon>
        <taxon>Methanobacteriati</taxon>
        <taxon>Methanobacteriota</taxon>
        <taxon>Methanomada group</taxon>
        <taxon>Methanococci</taxon>
        <taxon>Methanococcales</taxon>
        <taxon>Methanococcaceae</taxon>
        <taxon>Methanococcus</taxon>
    </lineage>
</organism>
<proteinExistence type="inferred from homology"/>
<protein>
    <recommendedName>
        <fullName evidence="1">Small ribosomal subunit protein eS28</fullName>
    </recommendedName>
    <alternativeName>
        <fullName evidence="2">30S ribosomal protein S28e</fullName>
    </alternativeName>
</protein>
<feature type="chain" id="PRO_0000136851" description="Small ribosomal subunit protein eS28">
    <location>
        <begin position="1"/>
        <end position="76"/>
    </location>
</feature>
<gene>
    <name evidence="1" type="primary">rps28e</name>
    <name type="ordered locus">MMP0640</name>
</gene>
<comment type="similarity">
    <text evidence="1">Belongs to the eukaryotic ribosomal protein eS28 family.</text>
</comment>